<reference key="1">
    <citation type="submission" date="2008-05" db="EMBL/GenBank/DDBJ databases">
        <title>Complete sequence of Shigella boydii serotype 18 strain BS512.</title>
        <authorList>
            <person name="Rasko D.A."/>
            <person name="Rosovitz M."/>
            <person name="Maurelli A.T."/>
            <person name="Myers G."/>
            <person name="Seshadri R."/>
            <person name="Cer R."/>
            <person name="Jiang L."/>
            <person name="Ravel J."/>
            <person name="Sebastian Y."/>
        </authorList>
    </citation>
    <scope>NUCLEOTIDE SEQUENCE [LARGE SCALE GENOMIC DNA]</scope>
    <source>
        <strain>CDC 3083-94 / BS512</strain>
    </source>
</reference>
<comment type="function">
    <text evidence="1">Catalyzes the reversible adenylation of nicotinate mononucleotide (NaMN) to nicotinic acid adenine dinucleotide (NaAD).</text>
</comment>
<comment type="catalytic activity">
    <reaction evidence="1">
        <text>nicotinate beta-D-ribonucleotide + ATP + H(+) = deamido-NAD(+) + diphosphate</text>
        <dbReference type="Rhea" id="RHEA:22860"/>
        <dbReference type="ChEBI" id="CHEBI:15378"/>
        <dbReference type="ChEBI" id="CHEBI:30616"/>
        <dbReference type="ChEBI" id="CHEBI:33019"/>
        <dbReference type="ChEBI" id="CHEBI:57502"/>
        <dbReference type="ChEBI" id="CHEBI:58437"/>
        <dbReference type="EC" id="2.7.7.18"/>
    </reaction>
</comment>
<comment type="pathway">
    <text evidence="1">Cofactor biosynthesis; NAD(+) biosynthesis; deamido-NAD(+) from nicotinate D-ribonucleotide: step 1/1.</text>
</comment>
<comment type="similarity">
    <text evidence="1">Belongs to the NadD family.</text>
</comment>
<accession>B2TU80</accession>
<keyword id="KW-0067">ATP-binding</keyword>
<keyword id="KW-0520">NAD</keyword>
<keyword id="KW-0547">Nucleotide-binding</keyword>
<keyword id="KW-0548">Nucleotidyltransferase</keyword>
<keyword id="KW-0662">Pyridine nucleotide biosynthesis</keyword>
<keyword id="KW-1185">Reference proteome</keyword>
<keyword id="KW-0808">Transferase</keyword>
<gene>
    <name evidence="1" type="primary">nadD</name>
    <name type="ordered locus">SbBS512_E0612</name>
</gene>
<dbReference type="EC" id="2.7.7.18" evidence="1"/>
<dbReference type="EMBL" id="CP001063">
    <property type="protein sequence ID" value="ACD08315.1"/>
    <property type="molecule type" value="Genomic_DNA"/>
</dbReference>
<dbReference type="RefSeq" id="WP_000838899.1">
    <property type="nucleotide sequence ID" value="NC_010658.1"/>
</dbReference>
<dbReference type="SMR" id="B2TU80"/>
<dbReference type="STRING" id="344609.SbBS512_E0612"/>
<dbReference type="KEGG" id="sbc:SbBS512_E0612"/>
<dbReference type="HOGENOM" id="CLU_069765_0_0_6"/>
<dbReference type="UniPathway" id="UPA00253">
    <property type="reaction ID" value="UER00332"/>
</dbReference>
<dbReference type="Proteomes" id="UP000001030">
    <property type="component" value="Chromosome"/>
</dbReference>
<dbReference type="GO" id="GO:0005524">
    <property type="term" value="F:ATP binding"/>
    <property type="evidence" value="ECO:0007669"/>
    <property type="project" value="UniProtKB-KW"/>
</dbReference>
<dbReference type="GO" id="GO:0004515">
    <property type="term" value="F:nicotinate-nucleotide adenylyltransferase activity"/>
    <property type="evidence" value="ECO:0007669"/>
    <property type="project" value="UniProtKB-UniRule"/>
</dbReference>
<dbReference type="GO" id="GO:0009435">
    <property type="term" value="P:NAD biosynthetic process"/>
    <property type="evidence" value="ECO:0007669"/>
    <property type="project" value="UniProtKB-UniRule"/>
</dbReference>
<dbReference type="CDD" id="cd02165">
    <property type="entry name" value="NMNAT"/>
    <property type="match status" value="1"/>
</dbReference>
<dbReference type="FunFam" id="3.40.50.620:FF:000039">
    <property type="entry name" value="Probable nicotinate-nucleotide adenylyltransferase"/>
    <property type="match status" value="1"/>
</dbReference>
<dbReference type="Gene3D" id="3.40.50.620">
    <property type="entry name" value="HUPs"/>
    <property type="match status" value="1"/>
</dbReference>
<dbReference type="HAMAP" id="MF_00244">
    <property type="entry name" value="NaMN_adenylyltr"/>
    <property type="match status" value="1"/>
</dbReference>
<dbReference type="InterPro" id="IPR004821">
    <property type="entry name" value="Cyt_trans-like"/>
</dbReference>
<dbReference type="InterPro" id="IPR005248">
    <property type="entry name" value="NadD/NMNAT"/>
</dbReference>
<dbReference type="InterPro" id="IPR014729">
    <property type="entry name" value="Rossmann-like_a/b/a_fold"/>
</dbReference>
<dbReference type="NCBIfam" id="TIGR00125">
    <property type="entry name" value="cyt_tran_rel"/>
    <property type="match status" value="1"/>
</dbReference>
<dbReference type="NCBIfam" id="TIGR00482">
    <property type="entry name" value="nicotinate (nicotinamide) nucleotide adenylyltransferase"/>
    <property type="match status" value="1"/>
</dbReference>
<dbReference type="NCBIfam" id="NF000839">
    <property type="entry name" value="PRK00071.1-1"/>
    <property type="match status" value="1"/>
</dbReference>
<dbReference type="NCBIfam" id="NF000840">
    <property type="entry name" value="PRK00071.1-3"/>
    <property type="match status" value="1"/>
</dbReference>
<dbReference type="PANTHER" id="PTHR39321">
    <property type="entry name" value="NICOTINATE-NUCLEOTIDE ADENYLYLTRANSFERASE-RELATED"/>
    <property type="match status" value="1"/>
</dbReference>
<dbReference type="PANTHER" id="PTHR39321:SF3">
    <property type="entry name" value="PHOSPHOPANTETHEINE ADENYLYLTRANSFERASE"/>
    <property type="match status" value="1"/>
</dbReference>
<dbReference type="Pfam" id="PF01467">
    <property type="entry name" value="CTP_transf_like"/>
    <property type="match status" value="1"/>
</dbReference>
<dbReference type="SUPFAM" id="SSF52374">
    <property type="entry name" value="Nucleotidylyl transferase"/>
    <property type="match status" value="1"/>
</dbReference>
<evidence type="ECO:0000255" key="1">
    <source>
        <dbReference type="HAMAP-Rule" id="MF_00244"/>
    </source>
</evidence>
<protein>
    <recommendedName>
        <fullName evidence="1">Probable nicotinate-nucleotide adenylyltransferase</fullName>
        <ecNumber evidence="1">2.7.7.18</ecNumber>
    </recommendedName>
    <alternativeName>
        <fullName evidence="1">Deamido-NAD(+) diphosphorylase</fullName>
    </alternativeName>
    <alternativeName>
        <fullName evidence="1">Deamido-NAD(+) pyrophosphorylase</fullName>
    </alternativeName>
    <alternativeName>
        <fullName evidence="1">Nicotinate mononucleotide adenylyltransferase</fullName>
        <shortName evidence="1">NaMN adenylyltransferase</shortName>
    </alternativeName>
</protein>
<name>NADD_SHIB3</name>
<proteinExistence type="inferred from homology"/>
<feature type="chain" id="PRO_1000100795" description="Probable nicotinate-nucleotide adenylyltransferase">
    <location>
        <begin position="1"/>
        <end position="213"/>
    </location>
</feature>
<organism>
    <name type="scientific">Shigella boydii serotype 18 (strain CDC 3083-94 / BS512)</name>
    <dbReference type="NCBI Taxonomy" id="344609"/>
    <lineage>
        <taxon>Bacteria</taxon>
        <taxon>Pseudomonadati</taxon>
        <taxon>Pseudomonadota</taxon>
        <taxon>Gammaproteobacteria</taxon>
        <taxon>Enterobacterales</taxon>
        <taxon>Enterobacteriaceae</taxon>
        <taxon>Shigella</taxon>
    </lineage>
</organism>
<sequence>MKSLQALFGGTFDPVHYGHLNPVETLANLIGLTRVTIIPNNVPPHRPQPEANSVQRKHMLELAIADKPLFTLDERELKRNAPSYTAQTLKEWRQEQGPDVPLAFIIGQDSLLTFPTWYEYETILDNAHLIVCRRPGYPLEMAQPQYQQWLEDHLTHNQEDLHLQPAGKIYLAETPWFNISATIIRERLQNGESCEDLLPEPVLTYINQQGLYR</sequence>